<feature type="chain" id="PRO_0000316017" description="Transcriptional adapter 1">
    <location>
        <begin position="1"/>
        <end position="335"/>
    </location>
</feature>
<feature type="region of interest" description="Disordered" evidence="2">
    <location>
        <begin position="83"/>
        <end position="103"/>
    </location>
</feature>
<feature type="compositionally biased region" description="Low complexity" evidence="2">
    <location>
        <begin position="84"/>
        <end position="93"/>
    </location>
</feature>
<feature type="compositionally biased region" description="Basic residues" evidence="2">
    <location>
        <begin position="94"/>
        <end position="103"/>
    </location>
</feature>
<gene>
    <name type="primary">TADA1</name>
    <name type="synonym">TADA1L</name>
</gene>
<proteinExistence type="evidence at transcript level"/>
<dbReference type="EMBL" id="CR857995">
    <property type="protein sequence ID" value="CAH90238.1"/>
    <property type="molecule type" value="mRNA"/>
</dbReference>
<dbReference type="RefSeq" id="NP_001125101.1">
    <property type="nucleotide sequence ID" value="NM_001131629.1"/>
</dbReference>
<dbReference type="SMR" id="Q5RDB9"/>
<dbReference type="FunCoup" id="Q5RDB9">
    <property type="interactions" value="2856"/>
</dbReference>
<dbReference type="STRING" id="9601.ENSPPYP00000000651"/>
<dbReference type="Ensembl" id="ENSPPYT00000000677.3">
    <property type="protein sequence ID" value="ENSPPYP00000000652.3"/>
    <property type="gene ID" value="ENSPPYG00000000557.3"/>
</dbReference>
<dbReference type="GeneID" id="100171983"/>
<dbReference type="KEGG" id="pon:100171983"/>
<dbReference type="CTD" id="117143"/>
<dbReference type="eggNOG" id="ENOG502QRMT">
    <property type="taxonomic scope" value="Eukaryota"/>
</dbReference>
<dbReference type="GeneTree" id="ENSGT00390000011644"/>
<dbReference type="InParanoid" id="Q5RDB9"/>
<dbReference type="OMA" id="NIMTEDQ"/>
<dbReference type="OrthoDB" id="10264870at2759"/>
<dbReference type="Proteomes" id="UP000001595">
    <property type="component" value="Chromosome 1"/>
</dbReference>
<dbReference type="GO" id="GO:0005829">
    <property type="term" value="C:cytosol"/>
    <property type="evidence" value="ECO:0007669"/>
    <property type="project" value="Ensembl"/>
</dbReference>
<dbReference type="GO" id="GO:0005925">
    <property type="term" value="C:focal adhesion"/>
    <property type="evidence" value="ECO:0007669"/>
    <property type="project" value="Ensembl"/>
</dbReference>
<dbReference type="GO" id="GO:0005654">
    <property type="term" value="C:nucleoplasm"/>
    <property type="evidence" value="ECO:0007669"/>
    <property type="project" value="Ensembl"/>
</dbReference>
<dbReference type="GO" id="GO:0000124">
    <property type="term" value="C:SAGA complex"/>
    <property type="evidence" value="ECO:0007669"/>
    <property type="project" value="Ensembl"/>
</dbReference>
<dbReference type="GO" id="GO:0003713">
    <property type="term" value="F:transcription coactivator activity"/>
    <property type="evidence" value="ECO:0007669"/>
    <property type="project" value="Ensembl"/>
</dbReference>
<dbReference type="GO" id="GO:0006357">
    <property type="term" value="P:regulation of transcription by RNA polymerase II"/>
    <property type="evidence" value="ECO:0007669"/>
    <property type="project" value="TreeGrafter"/>
</dbReference>
<dbReference type="CDD" id="cd22934">
    <property type="entry name" value="HFD_TADA1"/>
    <property type="match status" value="1"/>
</dbReference>
<dbReference type="InterPro" id="IPR024738">
    <property type="entry name" value="Hfi1/Tada1"/>
</dbReference>
<dbReference type="PANTHER" id="PTHR21277">
    <property type="entry name" value="TRANSCRIPTIONAL ADAPTER 1"/>
    <property type="match status" value="1"/>
</dbReference>
<dbReference type="PANTHER" id="PTHR21277:SF5">
    <property type="entry name" value="TRANSCRIPTIONAL ADAPTER 1"/>
    <property type="match status" value="1"/>
</dbReference>
<dbReference type="Pfam" id="PF12767">
    <property type="entry name" value="SAGA-Tad1"/>
    <property type="match status" value="2"/>
</dbReference>
<keyword id="KW-0539">Nucleus</keyword>
<keyword id="KW-1185">Reference proteome</keyword>
<keyword id="KW-0804">Transcription</keyword>
<keyword id="KW-0805">Transcription regulation</keyword>
<accession>Q5RDB9</accession>
<name>TADA1_PONAB</name>
<organism>
    <name type="scientific">Pongo abelii</name>
    <name type="common">Sumatran orangutan</name>
    <name type="synonym">Pongo pygmaeus abelii</name>
    <dbReference type="NCBI Taxonomy" id="9601"/>
    <lineage>
        <taxon>Eukaryota</taxon>
        <taxon>Metazoa</taxon>
        <taxon>Chordata</taxon>
        <taxon>Craniata</taxon>
        <taxon>Vertebrata</taxon>
        <taxon>Euteleostomi</taxon>
        <taxon>Mammalia</taxon>
        <taxon>Eutheria</taxon>
        <taxon>Euarchontoglires</taxon>
        <taxon>Primates</taxon>
        <taxon>Haplorrhini</taxon>
        <taxon>Catarrhini</taxon>
        <taxon>Hominidae</taxon>
        <taxon>Pongo</taxon>
    </lineage>
</organism>
<sequence>MATFVSELEAAKKNLSEALGDNVKQYWANLKLWFKQKISKEEFDLEAHRLLTQDNVHSHNDFLLAILTRCQILVSTPDGAGSLPWPGGSAAKPGKPKGKKKLSSVRQKFDHRFQPQNPLSGAQQFVAKDPQDDDDLKLCSHTMMLPTRGQLEGRMIVTAYEHGLDNVTEEAVSAVVYAVENHLKDILTSVVSRRKAYRLRDGHFKYAFGSNVTPQPYLKNSVVAYNNLIESPPAFTAPCAGQNPASHPPPDDAEQQAALLLACSGDTLPASLPPVNMYDLFEALQVHREVIPTHTVYALNIERIITKLWHPNHEELQQDKVHRQRLAAKEGLLLC</sequence>
<protein>
    <recommendedName>
        <fullName>Transcriptional adapter 1</fullName>
    </recommendedName>
    <alternativeName>
        <fullName>Transcriptional adapter 1-like protein</fullName>
    </alternativeName>
</protein>
<comment type="function">
    <text>Probably involved in transcriptional regulation.</text>
</comment>
<comment type="subunit">
    <text evidence="1">Component of the STAGA transcription coactivator-HAT complex, at least composed of SUPT3H, GCN5L2, TAF5L, TAF6L, SUPT7L, TADA3L, TAD1L, TAF10, TAF12, TRRAP and TAF9.</text>
</comment>
<comment type="subcellular location">
    <subcellularLocation>
        <location evidence="1">Nucleus</location>
    </subcellularLocation>
</comment>
<comment type="similarity">
    <text evidence="3">Belongs to the TADA1 family.</text>
</comment>
<evidence type="ECO:0000250" key="1"/>
<evidence type="ECO:0000256" key="2">
    <source>
        <dbReference type="SAM" id="MobiDB-lite"/>
    </source>
</evidence>
<evidence type="ECO:0000305" key="3"/>
<reference key="1">
    <citation type="submission" date="2004-11" db="EMBL/GenBank/DDBJ databases">
        <authorList>
            <consortium name="The German cDNA consortium"/>
        </authorList>
    </citation>
    <scope>NUCLEOTIDE SEQUENCE [LARGE SCALE MRNA]</scope>
    <source>
        <tissue>Brain cortex</tissue>
    </source>
</reference>